<sequence>MAAEAETKAMITLRSCEGQVFEVAEAVAMESQTIRHMIEDKCADTGIPLPNVSAKILSKVIEYCSKHVEARGGAAAAADGDAPAPAAVEANKAVEDELKTFDAEFVKVDQSTLFDLILAANYLNIKGLLDLTCQTVADMIKGKTPEEIRKTFNIKNDFTPEEEEEVRRENQWAFE</sequence>
<gene>
    <name evidence="7" type="primary">SKP20</name>
    <name evidence="6" type="synonym">OSK20</name>
    <name evidence="9" type="ordered locus">Os09g0539500</name>
    <name evidence="7" type="ordered locus">LOC_Os09g36830</name>
    <name evidence="8" type="ORF">B1274F11.9</name>
    <name evidence="10" type="ORF">OsJ_30167</name>
</gene>
<organism>
    <name type="scientific">Oryza sativa subsp. japonica</name>
    <name type="common">Rice</name>
    <dbReference type="NCBI Taxonomy" id="39947"/>
    <lineage>
        <taxon>Eukaryota</taxon>
        <taxon>Viridiplantae</taxon>
        <taxon>Streptophyta</taxon>
        <taxon>Embryophyta</taxon>
        <taxon>Tracheophyta</taxon>
        <taxon>Spermatophyta</taxon>
        <taxon>Magnoliopsida</taxon>
        <taxon>Liliopsida</taxon>
        <taxon>Poales</taxon>
        <taxon>Poaceae</taxon>
        <taxon>BOP clade</taxon>
        <taxon>Oryzoideae</taxon>
        <taxon>Oryzeae</taxon>
        <taxon>Oryzinae</taxon>
        <taxon>Oryza</taxon>
        <taxon>Oryza sativa</taxon>
    </lineage>
</organism>
<accession>Q651E8</accession>
<accession>Q0IZZ6</accession>
<protein>
    <recommendedName>
        <fullName evidence="6">SKP1-like protein 20</fullName>
    </recommendedName>
    <alternativeName>
        <fullName evidence="7">SKP1-like 20</fullName>
    </alternativeName>
</protein>
<dbReference type="EMBL" id="AP006149">
    <property type="protein sequence ID" value="BAD46569.1"/>
    <property type="molecule type" value="Genomic_DNA"/>
</dbReference>
<dbReference type="EMBL" id="AP008215">
    <property type="protein sequence ID" value="BAF25719.2"/>
    <property type="status" value="ALT_SEQ"/>
    <property type="molecule type" value="Genomic_DNA"/>
</dbReference>
<dbReference type="EMBL" id="AP014965">
    <property type="protein sequence ID" value="BAT09185.1"/>
    <property type="molecule type" value="Genomic_DNA"/>
</dbReference>
<dbReference type="EMBL" id="CM000146">
    <property type="protein sequence ID" value="EEE70133.1"/>
    <property type="molecule type" value="Genomic_DNA"/>
</dbReference>
<dbReference type="EMBL" id="AK241794">
    <property type="protein sequence ID" value="BAH01115.1"/>
    <property type="molecule type" value="mRNA"/>
</dbReference>
<dbReference type="PDB" id="8IF6">
    <property type="method" value="EM"/>
    <property type="resolution" value="7.09 A"/>
    <property type="chains" value="B=1-175"/>
</dbReference>
<dbReference type="PDBsum" id="8IF6"/>
<dbReference type="EMDB" id="EMD-35402"/>
<dbReference type="SMR" id="Q651E8"/>
<dbReference type="FunCoup" id="Q651E8">
    <property type="interactions" value="2429"/>
</dbReference>
<dbReference type="STRING" id="39947.Q651E8"/>
<dbReference type="PaxDb" id="39947-Q651E8"/>
<dbReference type="EnsemblPlants" id="Os09t0539500-01">
    <property type="protein sequence ID" value="Os09t0539500-01"/>
    <property type="gene ID" value="Os09g0539500"/>
</dbReference>
<dbReference type="GeneID" id="4347721"/>
<dbReference type="Gramene" id="Os09t0539500-01">
    <property type="protein sequence ID" value="Os09t0539500-01"/>
    <property type="gene ID" value="Os09g0539500"/>
</dbReference>
<dbReference type="KEGG" id="dosa:Os09g0539500"/>
<dbReference type="KEGG" id="osa:4347721"/>
<dbReference type="eggNOG" id="KOG1724">
    <property type="taxonomic scope" value="Eukaryota"/>
</dbReference>
<dbReference type="HOGENOM" id="CLU_059252_6_1_1"/>
<dbReference type="InParanoid" id="Q651E8"/>
<dbReference type="OMA" id="EWCEIRE"/>
<dbReference type="OrthoDB" id="1903179at2759"/>
<dbReference type="UniPathway" id="UPA00143"/>
<dbReference type="Proteomes" id="UP000000763">
    <property type="component" value="Chromosome 9"/>
</dbReference>
<dbReference type="Proteomes" id="UP000007752">
    <property type="component" value="Chromosome 9"/>
</dbReference>
<dbReference type="Proteomes" id="UP000059680">
    <property type="component" value="Chromosome 9"/>
</dbReference>
<dbReference type="GO" id="GO:0005737">
    <property type="term" value="C:cytoplasm"/>
    <property type="evidence" value="ECO:0000318"/>
    <property type="project" value="GO_Central"/>
</dbReference>
<dbReference type="GO" id="GO:0005634">
    <property type="term" value="C:nucleus"/>
    <property type="evidence" value="ECO:0000318"/>
    <property type="project" value="GO_Central"/>
</dbReference>
<dbReference type="GO" id="GO:0097602">
    <property type="term" value="F:cullin family protein binding"/>
    <property type="evidence" value="ECO:0000318"/>
    <property type="project" value="GO_Central"/>
</dbReference>
<dbReference type="GO" id="GO:0009867">
    <property type="term" value="P:jasmonic acid mediated signaling pathway"/>
    <property type="evidence" value="ECO:0007669"/>
    <property type="project" value="UniProtKB-ARBA"/>
</dbReference>
<dbReference type="GO" id="GO:0016567">
    <property type="term" value="P:protein ubiquitination"/>
    <property type="evidence" value="ECO:0007669"/>
    <property type="project" value="UniProtKB-UniPathway"/>
</dbReference>
<dbReference type="GO" id="GO:0031146">
    <property type="term" value="P:SCF-dependent proteasomal ubiquitin-dependent protein catabolic process"/>
    <property type="evidence" value="ECO:0000318"/>
    <property type="project" value="GO_Central"/>
</dbReference>
<dbReference type="CDD" id="cd18322">
    <property type="entry name" value="BTB_POZ_SKP1"/>
    <property type="match status" value="1"/>
</dbReference>
<dbReference type="FunFam" id="3.30.710.10:FF:000057">
    <property type="entry name" value="SKP1-like protein 1A"/>
    <property type="match status" value="1"/>
</dbReference>
<dbReference type="Gene3D" id="3.30.710.10">
    <property type="entry name" value="Potassium Channel Kv1.1, Chain A"/>
    <property type="match status" value="1"/>
</dbReference>
<dbReference type="InterPro" id="IPR016897">
    <property type="entry name" value="SKP1"/>
</dbReference>
<dbReference type="InterPro" id="IPR001232">
    <property type="entry name" value="SKP1-like"/>
</dbReference>
<dbReference type="InterPro" id="IPR036296">
    <property type="entry name" value="SKP1-like_dim_sf"/>
</dbReference>
<dbReference type="InterPro" id="IPR011333">
    <property type="entry name" value="SKP1/BTB/POZ_sf"/>
</dbReference>
<dbReference type="InterPro" id="IPR016072">
    <property type="entry name" value="Skp1_comp_dimer"/>
</dbReference>
<dbReference type="InterPro" id="IPR016073">
    <property type="entry name" value="Skp1_comp_POZ"/>
</dbReference>
<dbReference type="PANTHER" id="PTHR11165">
    <property type="entry name" value="SKP1"/>
    <property type="match status" value="1"/>
</dbReference>
<dbReference type="Pfam" id="PF01466">
    <property type="entry name" value="Skp1"/>
    <property type="match status" value="1"/>
</dbReference>
<dbReference type="Pfam" id="PF03931">
    <property type="entry name" value="Skp1_POZ"/>
    <property type="match status" value="1"/>
</dbReference>
<dbReference type="PIRSF" id="PIRSF028729">
    <property type="entry name" value="E3_ubiquit_lig_SCF_Skp"/>
    <property type="match status" value="1"/>
</dbReference>
<dbReference type="SMART" id="SM00512">
    <property type="entry name" value="Skp1"/>
    <property type="match status" value="1"/>
</dbReference>
<dbReference type="SUPFAM" id="SSF54695">
    <property type="entry name" value="POZ domain"/>
    <property type="match status" value="1"/>
</dbReference>
<dbReference type="SUPFAM" id="SSF81382">
    <property type="entry name" value="Skp1 dimerisation domain-like"/>
    <property type="match status" value="1"/>
</dbReference>
<keyword id="KW-0002">3D-structure</keyword>
<keyword id="KW-0945">Host-virus interaction</keyword>
<keyword id="KW-0539">Nucleus</keyword>
<keyword id="KW-1185">Reference proteome</keyword>
<keyword id="KW-0833">Ubl conjugation pathway</keyword>
<reference key="1">
    <citation type="journal article" date="2005" name="Nature">
        <title>The map-based sequence of the rice genome.</title>
        <authorList>
            <consortium name="International rice genome sequencing project (IRGSP)"/>
        </authorList>
    </citation>
    <scope>NUCLEOTIDE SEQUENCE [LARGE SCALE GENOMIC DNA]</scope>
    <source>
        <strain>cv. Nipponbare</strain>
    </source>
</reference>
<reference key="2">
    <citation type="journal article" date="2008" name="Nucleic Acids Res.">
        <title>The rice annotation project database (RAP-DB): 2008 update.</title>
        <authorList>
            <consortium name="The rice annotation project (RAP)"/>
        </authorList>
    </citation>
    <scope>GENOME REANNOTATION</scope>
    <source>
        <strain>cv. Nipponbare</strain>
    </source>
</reference>
<reference key="3">
    <citation type="journal article" date="2013" name="Rice">
        <title>Improvement of the Oryza sativa Nipponbare reference genome using next generation sequence and optical map data.</title>
        <authorList>
            <person name="Kawahara Y."/>
            <person name="de la Bastide M."/>
            <person name="Hamilton J.P."/>
            <person name="Kanamori H."/>
            <person name="McCombie W.R."/>
            <person name="Ouyang S."/>
            <person name="Schwartz D.C."/>
            <person name="Tanaka T."/>
            <person name="Wu J."/>
            <person name="Zhou S."/>
            <person name="Childs K.L."/>
            <person name="Davidson R.M."/>
            <person name="Lin H."/>
            <person name="Quesada-Ocampo L."/>
            <person name="Vaillancourt B."/>
            <person name="Sakai H."/>
            <person name="Lee S.S."/>
            <person name="Kim J."/>
            <person name="Numa H."/>
            <person name="Itoh T."/>
            <person name="Buell C.R."/>
            <person name="Matsumoto T."/>
        </authorList>
    </citation>
    <scope>GENOME REANNOTATION</scope>
    <source>
        <strain>cv. Nipponbare</strain>
    </source>
</reference>
<reference key="4">
    <citation type="journal article" date="2005" name="PLoS Biol.">
        <title>The genomes of Oryza sativa: a history of duplications.</title>
        <authorList>
            <person name="Yu J."/>
            <person name="Wang J."/>
            <person name="Lin W."/>
            <person name="Li S."/>
            <person name="Li H."/>
            <person name="Zhou J."/>
            <person name="Ni P."/>
            <person name="Dong W."/>
            <person name="Hu S."/>
            <person name="Zeng C."/>
            <person name="Zhang J."/>
            <person name="Zhang Y."/>
            <person name="Li R."/>
            <person name="Xu Z."/>
            <person name="Li S."/>
            <person name="Li X."/>
            <person name="Zheng H."/>
            <person name="Cong L."/>
            <person name="Lin L."/>
            <person name="Yin J."/>
            <person name="Geng J."/>
            <person name="Li G."/>
            <person name="Shi J."/>
            <person name="Liu J."/>
            <person name="Lv H."/>
            <person name="Li J."/>
            <person name="Wang J."/>
            <person name="Deng Y."/>
            <person name="Ran L."/>
            <person name="Shi X."/>
            <person name="Wang X."/>
            <person name="Wu Q."/>
            <person name="Li C."/>
            <person name="Ren X."/>
            <person name="Wang J."/>
            <person name="Wang X."/>
            <person name="Li D."/>
            <person name="Liu D."/>
            <person name="Zhang X."/>
            <person name="Ji Z."/>
            <person name="Zhao W."/>
            <person name="Sun Y."/>
            <person name="Zhang Z."/>
            <person name="Bao J."/>
            <person name="Han Y."/>
            <person name="Dong L."/>
            <person name="Ji J."/>
            <person name="Chen P."/>
            <person name="Wu S."/>
            <person name="Liu J."/>
            <person name="Xiao Y."/>
            <person name="Bu D."/>
            <person name="Tan J."/>
            <person name="Yang L."/>
            <person name="Ye C."/>
            <person name="Zhang J."/>
            <person name="Xu J."/>
            <person name="Zhou Y."/>
            <person name="Yu Y."/>
            <person name="Zhang B."/>
            <person name="Zhuang S."/>
            <person name="Wei H."/>
            <person name="Liu B."/>
            <person name="Lei M."/>
            <person name="Yu H."/>
            <person name="Li Y."/>
            <person name="Xu H."/>
            <person name="Wei S."/>
            <person name="He X."/>
            <person name="Fang L."/>
            <person name="Zhang Z."/>
            <person name="Zhang Y."/>
            <person name="Huang X."/>
            <person name="Su Z."/>
            <person name="Tong W."/>
            <person name="Li J."/>
            <person name="Tong Z."/>
            <person name="Li S."/>
            <person name="Ye J."/>
            <person name="Wang L."/>
            <person name="Fang L."/>
            <person name="Lei T."/>
            <person name="Chen C.-S."/>
            <person name="Chen H.-C."/>
            <person name="Xu Z."/>
            <person name="Li H."/>
            <person name="Huang H."/>
            <person name="Zhang F."/>
            <person name="Xu H."/>
            <person name="Li N."/>
            <person name="Zhao C."/>
            <person name="Li S."/>
            <person name="Dong L."/>
            <person name="Huang Y."/>
            <person name="Li L."/>
            <person name="Xi Y."/>
            <person name="Qi Q."/>
            <person name="Li W."/>
            <person name="Zhang B."/>
            <person name="Hu W."/>
            <person name="Zhang Y."/>
            <person name="Tian X."/>
            <person name="Jiao Y."/>
            <person name="Liang X."/>
            <person name="Jin J."/>
            <person name="Gao L."/>
            <person name="Zheng W."/>
            <person name="Hao B."/>
            <person name="Liu S.-M."/>
            <person name="Wang W."/>
            <person name="Yuan L."/>
            <person name="Cao M."/>
            <person name="McDermott J."/>
            <person name="Samudrala R."/>
            <person name="Wang J."/>
            <person name="Wong G.K.-S."/>
            <person name="Yang H."/>
        </authorList>
    </citation>
    <scope>NUCLEOTIDE SEQUENCE [LARGE SCALE GENOMIC DNA]</scope>
    <source>
        <strain>cv. Nipponbare</strain>
    </source>
</reference>
<reference key="5">
    <citation type="submission" date="2006-10" db="EMBL/GenBank/DDBJ databases">
        <title>Oryza sativa full length cDNA.</title>
        <authorList>
            <consortium name="The rice full-length cDNA consortium"/>
        </authorList>
    </citation>
    <scope>NUCLEOTIDE SEQUENCE [LARGE SCALE MRNA]</scope>
    <source>
        <strain>cv. Nipponbare</strain>
    </source>
</reference>
<reference key="6">
    <citation type="journal article" date="2014" name="Plant Cell Physiol.">
        <title>DWARF3 participates in an SCF complex and associates with DWARF14 to suppress rice shoot branching.</title>
        <authorList>
            <person name="Zhao J."/>
            <person name="Wang T."/>
            <person name="Wang M."/>
            <person name="Liu Y."/>
            <person name="Yuan S."/>
            <person name="Gao Y."/>
            <person name="Yin L."/>
            <person name="Sun W."/>
            <person name="Peng L."/>
            <person name="Zhang W."/>
            <person name="Wan J."/>
            <person name="Li X."/>
        </authorList>
    </citation>
    <scope>INTERACTION WITH D3</scope>
</reference>
<reference key="7">
    <citation type="journal article" date="2017" name="PLoS ONE">
        <title>Rice black streaked dwarf virus P7-2 forms a SCF complex through binding to Oryza sativa SKP1-like proteins, and interacts with GID2 involved in the gibberellin pathway.</title>
        <authorList>
            <person name="Tao T."/>
            <person name="Zhou C.J."/>
            <person name="Wang Q."/>
            <person name="Chen X.R."/>
            <person name="Sun Q."/>
            <person name="Zhao T.Y."/>
            <person name="Ye J.C."/>
            <person name="Wang Y."/>
            <person name="Zhang Z.Y."/>
            <person name="Zhang Y.L."/>
            <person name="Guo Z.J."/>
            <person name="Wang X.B."/>
            <person name="Li D.W."/>
            <person name="Yu J.L."/>
            <person name="Han C.G."/>
        </authorList>
    </citation>
    <scope>INTERACTION WITH VIRUS P7-2 PROTEIN</scope>
</reference>
<proteinExistence type="evidence at protein level"/>
<feature type="chain" id="PRO_0000446885" description="SKP1-like protein 20">
    <location>
        <begin position="1"/>
        <end position="175"/>
    </location>
</feature>
<feature type="region of interest" description="Interaction with the F-box domain of F-box proteins" evidence="1">
    <location>
        <begin position="117"/>
        <end position="175"/>
    </location>
</feature>
<evidence type="ECO:0000250" key="1">
    <source>
        <dbReference type="UniProtKB" id="Q39255"/>
    </source>
</evidence>
<evidence type="ECO:0000250" key="2">
    <source>
        <dbReference type="UniProtKB" id="Q6PL11"/>
    </source>
</evidence>
<evidence type="ECO:0000250" key="3">
    <source>
        <dbReference type="UniProtKB" id="Q9FHW7"/>
    </source>
</evidence>
<evidence type="ECO:0000269" key="4">
    <source>
    </source>
</evidence>
<evidence type="ECO:0000269" key="5">
    <source>
    </source>
</evidence>
<evidence type="ECO:0000303" key="6">
    <source>
    </source>
</evidence>
<evidence type="ECO:0000305" key="7"/>
<evidence type="ECO:0000312" key="8">
    <source>
        <dbReference type="EMBL" id="BAD46569.1"/>
    </source>
</evidence>
<evidence type="ECO:0000312" key="9">
    <source>
        <dbReference type="EMBL" id="BAT09185.1"/>
    </source>
</evidence>
<evidence type="ECO:0000312" key="10">
    <source>
        <dbReference type="EMBL" id="EEE70133.1"/>
    </source>
</evidence>
<name>SKP20_ORYSJ</name>
<comment type="function">
    <text evidence="3">Involved in ubiquitination and subsequent proteasomal degradation of target proteins. Together with CUL1, a RING-box and a F-box protein, it forms a SCF E3 ubiquitin ligase complex. The functional specificity of this complex depends on the type of F-box protein. In the SCF complex, it serves as an adapter that links the F-box protein to CUL1.</text>
</comment>
<comment type="pathway">
    <text evidence="3">Protein modification; protein ubiquitination.</text>
</comment>
<comment type="subunit">
    <text evidence="2 4 5">Part of a SCF (SKP1-CUL1-F-box protein) E3 ubiquitin-protein ligase complex (By similarity). Interacts with rice black streaked dwarf virus RBSDV protein P7-2 (PubMed:28494021). Is able to form the SCF complex together with CUL1 and the viral P7-2 protein (By similarity). Interacts with D3 (PubMed:24616269).</text>
</comment>
<comment type="subcellular location">
    <subcellularLocation>
        <location evidence="3">Nucleus</location>
    </subcellularLocation>
</comment>
<comment type="similarity">
    <text evidence="7">Belongs to the SKP1 family.</text>
</comment>
<comment type="sequence caution" evidence="7">
    <conflict type="erroneous gene model prediction">
        <sequence resource="EMBL-CDS" id="BAF25719"/>
    </conflict>
</comment>